<keyword id="KW-0560">Oxidoreductase</keyword>
<keyword id="KW-1185">Reference proteome</keyword>
<comment type="function">
    <text evidence="1">Has an important function as a repair enzyme for proteins that have been inactivated by oxidation. Catalyzes the reversible oxidation-reduction of methionine sulfoxide in proteins to methionine.</text>
</comment>
<comment type="catalytic activity">
    <reaction evidence="1">
        <text>L-methionyl-[protein] + [thioredoxin]-disulfide + H2O = L-methionyl-(S)-S-oxide-[protein] + [thioredoxin]-dithiol</text>
        <dbReference type="Rhea" id="RHEA:14217"/>
        <dbReference type="Rhea" id="RHEA-COMP:10698"/>
        <dbReference type="Rhea" id="RHEA-COMP:10700"/>
        <dbReference type="Rhea" id="RHEA-COMP:12313"/>
        <dbReference type="Rhea" id="RHEA-COMP:12315"/>
        <dbReference type="ChEBI" id="CHEBI:15377"/>
        <dbReference type="ChEBI" id="CHEBI:16044"/>
        <dbReference type="ChEBI" id="CHEBI:29950"/>
        <dbReference type="ChEBI" id="CHEBI:44120"/>
        <dbReference type="ChEBI" id="CHEBI:50058"/>
        <dbReference type="EC" id="1.8.4.11"/>
    </reaction>
</comment>
<comment type="catalytic activity">
    <reaction evidence="1">
        <text>[thioredoxin]-disulfide + L-methionine + H2O = L-methionine (S)-S-oxide + [thioredoxin]-dithiol</text>
        <dbReference type="Rhea" id="RHEA:19993"/>
        <dbReference type="Rhea" id="RHEA-COMP:10698"/>
        <dbReference type="Rhea" id="RHEA-COMP:10700"/>
        <dbReference type="ChEBI" id="CHEBI:15377"/>
        <dbReference type="ChEBI" id="CHEBI:29950"/>
        <dbReference type="ChEBI" id="CHEBI:50058"/>
        <dbReference type="ChEBI" id="CHEBI:57844"/>
        <dbReference type="ChEBI" id="CHEBI:58772"/>
        <dbReference type="EC" id="1.8.4.11"/>
    </reaction>
</comment>
<comment type="similarity">
    <text evidence="1">Belongs to the MsrA Met sulfoxide reductase family.</text>
</comment>
<reference key="1">
    <citation type="journal article" date="2008" name="Infect. Immun.">
        <title>Genome of Mycoplasma arthritidis.</title>
        <authorList>
            <person name="Dybvig K."/>
            <person name="Zuhua C."/>
            <person name="Lao P."/>
            <person name="Jordan D.S."/>
            <person name="French C.T."/>
            <person name="Tu A.H."/>
            <person name="Loraine A.E."/>
        </authorList>
    </citation>
    <scope>NUCLEOTIDE SEQUENCE [LARGE SCALE GENOMIC DNA]</scope>
    <source>
        <strain>158L3-1</strain>
    </source>
</reference>
<dbReference type="EC" id="1.8.4.11" evidence="1"/>
<dbReference type="EMBL" id="CP001047">
    <property type="protein sequence ID" value="ACF07541.1"/>
    <property type="molecule type" value="Genomic_DNA"/>
</dbReference>
<dbReference type="RefSeq" id="WP_012498498.1">
    <property type="nucleotide sequence ID" value="NC_011025.1"/>
</dbReference>
<dbReference type="SMR" id="B3PND9"/>
<dbReference type="STRING" id="243272.MARTH_orf807"/>
<dbReference type="KEGG" id="mat:MARTH_orf807"/>
<dbReference type="eggNOG" id="COG0225">
    <property type="taxonomic scope" value="Bacteria"/>
</dbReference>
<dbReference type="HOGENOM" id="CLU_031040_10_2_14"/>
<dbReference type="Proteomes" id="UP000008812">
    <property type="component" value="Chromosome"/>
</dbReference>
<dbReference type="GO" id="GO:0005737">
    <property type="term" value="C:cytoplasm"/>
    <property type="evidence" value="ECO:0007669"/>
    <property type="project" value="TreeGrafter"/>
</dbReference>
<dbReference type="GO" id="GO:0036456">
    <property type="term" value="F:L-methionine-(S)-S-oxide reductase activity"/>
    <property type="evidence" value="ECO:0007669"/>
    <property type="project" value="TreeGrafter"/>
</dbReference>
<dbReference type="GO" id="GO:0008113">
    <property type="term" value="F:peptide-methionine (S)-S-oxide reductase activity"/>
    <property type="evidence" value="ECO:0007669"/>
    <property type="project" value="UniProtKB-UniRule"/>
</dbReference>
<dbReference type="GO" id="GO:0034599">
    <property type="term" value="P:cellular response to oxidative stress"/>
    <property type="evidence" value="ECO:0007669"/>
    <property type="project" value="TreeGrafter"/>
</dbReference>
<dbReference type="GO" id="GO:0036211">
    <property type="term" value="P:protein modification process"/>
    <property type="evidence" value="ECO:0007669"/>
    <property type="project" value="UniProtKB-UniRule"/>
</dbReference>
<dbReference type="Gene3D" id="3.30.1060.10">
    <property type="entry name" value="Peptide methionine sulphoxide reductase MsrA"/>
    <property type="match status" value="1"/>
</dbReference>
<dbReference type="HAMAP" id="MF_01401">
    <property type="entry name" value="MsrA"/>
    <property type="match status" value="1"/>
</dbReference>
<dbReference type="InterPro" id="IPR002569">
    <property type="entry name" value="Met_Sox_Rdtase_MsrA_dom"/>
</dbReference>
<dbReference type="InterPro" id="IPR036509">
    <property type="entry name" value="Met_Sox_Rdtase_MsrA_sf"/>
</dbReference>
<dbReference type="InterPro" id="IPR050162">
    <property type="entry name" value="MsrA_MetSO_reductase"/>
</dbReference>
<dbReference type="NCBIfam" id="TIGR00401">
    <property type="entry name" value="msrA"/>
    <property type="match status" value="1"/>
</dbReference>
<dbReference type="PANTHER" id="PTHR42799">
    <property type="entry name" value="MITOCHONDRIAL PEPTIDE METHIONINE SULFOXIDE REDUCTASE"/>
    <property type="match status" value="1"/>
</dbReference>
<dbReference type="PANTHER" id="PTHR42799:SF2">
    <property type="entry name" value="MITOCHONDRIAL PEPTIDE METHIONINE SULFOXIDE REDUCTASE"/>
    <property type="match status" value="1"/>
</dbReference>
<dbReference type="Pfam" id="PF01625">
    <property type="entry name" value="PMSR"/>
    <property type="match status" value="1"/>
</dbReference>
<dbReference type="SUPFAM" id="SSF55068">
    <property type="entry name" value="Peptide methionine sulfoxide reductase"/>
    <property type="match status" value="1"/>
</dbReference>
<organism>
    <name type="scientific">Metamycoplasma arthritidis (strain 158L3-1)</name>
    <name type="common">Mycoplasma arthritidis</name>
    <dbReference type="NCBI Taxonomy" id="243272"/>
    <lineage>
        <taxon>Bacteria</taxon>
        <taxon>Bacillati</taxon>
        <taxon>Mycoplasmatota</taxon>
        <taxon>Mycoplasmoidales</taxon>
        <taxon>Metamycoplasmataceae</taxon>
        <taxon>Metamycoplasma</taxon>
    </lineage>
</organism>
<feature type="chain" id="PRO_1000145416" description="Peptide methionine sulfoxide reductase MsrA">
    <location>
        <begin position="1"/>
        <end position="156"/>
    </location>
</feature>
<feature type="active site" evidence="1">
    <location>
        <position position="10"/>
    </location>
</feature>
<proteinExistence type="inferred from homology"/>
<gene>
    <name evidence="1" type="primary">msrA</name>
    <name type="ordered locus">MARTH_orf807</name>
</gene>
<accession>B3PND9</accession>
<evidence type="ECO:0000255" key="1">
    <source>
        <dbReference type="HAMAP-Rule" id="MF_01401"/>
    </source>
</evidence>
<sequence>MKKIYVAGGCFWGVQGFLKTIKGIKKTTVGYANSLLENPTYELVKSHVTDAVETVEVIYDENILSLKDIVKKLFAVIDPTARNYQGPDHGRQYRNGFYFVDQEDGVMLRELMLEFSKKYEKPLATEILPLDNYYLAEDYHQDYFDKHPNAVCHIKF</sequence>
<protein>
    <recommendedName>
        <fullName evidence="1">Peptide methionine sulfoxide reductase MsrA</fullName>
        <shortName evidence="1">Protein-methionine-S-oxide reductase</shortName>
        <ecNumber evidence="1">1.8.4.11</ecNumber>
    </recommendedName>
    <alternativeName>
        <fullName evidence="1">Peptide-methionine (S)-S-oxide reductase</fullName>
        <shortName evidence="1">Peptide Met(O) reductase</shortName>
    </alternativeName>
</protein>
<name>MSRA_META1</name>